<proteinExistence type="inferred from homology"/>
<organismHost>
    <name type="scientific">Erythrocebus patas</name>
    <name type="common">Red guenon</name>
    <name type="synonym">Cercopithecus patas</name>
    <dbReference type="NCBI Taxonomy" id="9538"/>
</organismHost>
<organismHost>
    <name type="scientific">Homo sapiens</name>
    <name type="common">Human</name>
    <dbReference type="NCBI Taxonomy" id="9606"/>
</organismHost>
<organismHost>
    <name type="scientific">Macaca</name>
    <name type="common">macaques</name>
    <dbReference type="NCBI Taxonomy" id="9539"/>
</organismHost>
<organismHost>
    <name type="scientific">Papio hamadryas</name>
    <name type="common">Hamadryas baboon</name>
    <dbReference type="NCBI Taxonomy" id="9557"/>
</organismHost>
<accession>Q6TUY0</accession>
<comment type="function">
    <text>Polymerase that creates the 3'-poly(A) tail of mRNA's.</text>
</comment>
<comment type="catalytic activity">
    <reaction>
        <text>RNA(n) + ATP = RNA(n)-3'-adenine ribonucleotide + diphosphate</text>
        <dbReference type="Rhea" id="RHEA:11332"/>
        <dbReference type="Rhea" id="RHEA-COMP:14527"/>
        <dbReference type="Rhea" id="RHEA-COMP:17347"/>
        <dbReference type="ChEBI" id="CHEBI:30616"/>
        <dbReference type="ChEBI" id="CHEBI:33019"/>
        <dbReference type="ChEBI" id="CHEBI:140395"/>
        <dbReference type="ChEBI" id="CHEBI:173115"/>
        <dbReference type="EC" id="2.7.7.19"/>
    </reaction>
</comment>
<comment type="subunit">
    <text evidence="1">Heterodimer of a large (catalytic) subunit and a small (regulatory) subunit.</text>
</comment>
<comment type="similarity">
    <text evidence="2">Belongs to the poxviridae poly(A) polymerase catalytic subunit family.</text>
</comment>
<name>PAP1_YMTV5</name>
<gene>
    <name type="primary">PAPL</name>
    <name type="ordered locus">32L</name>
</gene>
<keyword id="KW-0067">ATP-binding</keyword>
<keyword id="KW-0507">mRNA processing</keyword>
<keyword id="KW-0547">Nucleotide-binding</keyword>
<keyword id="KW-1185">Reference proteome</keyword>
<keyword id="KW-0804">Transcription</keyword>
<keyword id="KW-0808">Transferase</keyword>
<reference key="1">
    <citation type="journal article" date="2003" name="J. Virol.">
        <title>Complete genomic sequence and comparative analysis of the tumorigenic poxvirus Yaba monkey tumor virus.</title>
        <authorList>
            <person name="Brunetti C.R."/>
            <person name="Amano H."/>
            <person name="Ueda Y."/>
            <person name="Qin J."/>
            <person name="Miyamura T."/>
            <person name="Suzuki T."/>
            <person name="Li X."/>
            <person name="Barrett J.W."/>
            <person name="McFadden G."/>
        </authorList>
    </citation>
    <scope>NUCLEOTIDE SEQUENCE [LARGE SCALE GENOMIC DNA]</scope>
</reference>
<protein>
    <recommendedName>
        <fullName>Poly(A) polymerase catalytic subunit</fullName>
        <ecNumber>2.7.7.19</ecNumber>
    </recommendedName>
    <alternativeName>
        <fullName>Poly(A) polymerase large subunit</fullName>
        <shortName>PAP-L</shortName>
    </alternativeName>
</protein>
<dbReference type="EC" id="2.7.7.19"/>
<dbReference type="EMBL" id="AY386371">
    <property type="protein sequence ID" value="AAR07389.1"/>
    <property type="molecule type" value="Genomic_DNA"/>
</dbReference>
<dbReference type="RefSeq" id="NP_938288.1">
    <property type="nucleotide sequence ID" value="NC_005179.1"/>
</dbReference>
<dbReference type="SMR" id="Q6TUY0"/>
<dbReference type="KEGG" id="vg:2943665"/>
<dbReference type="Proteomes" id="UP000008596">
    <property type="component" value="Segment"/>
</dbReference>
<dbReference type="GO" id="GO:0005524">
    <property type="term" value="F:ATP binding"/>
    <property type="evidence" value="ECO:0007669"/>
    <property type="project" value="UniProtKB-KW"/>
</dbReference>
<dbReference type="GO" id="GO:1990817">
    <property type="term" value="F:poly(A) RNA polymerase activity"/>
    <property type="evidence" value="ECO:0007669"/>
    <property type="project" value="UniProtKB-EC"/>
</dbReference>
<dbReference type="GO" id="GO:0006397">
    <property type="term" value="P:mRNA processing"/>
    <property type="evidence" value="ECO:0007669"/>
    <property type="project" value="UniProtKB-KW"/>
</dbReference>
<dbReference type="CDD" id="cd20919">
    <property type="entry name" value="polyA_pol_Pox"/>
    <property type="match status" value="1"/>
</dbReference>
<dbReference type="Gene3D" id="1.20.1270.320">
    <property type="entry name" value="Poxvirus poly(A) polymerase, N domain"/>
    <property type="match status" value="1"/>
</dbReference>
<dbReference type="Gene3D" id="3.30.460.60">
    <property type="entry name" value="Poxvirus poly(A) polymerase, nucleotidyltransferase domain"/>
    <property type="match status" value="1"/>
</dbReference>
<dbReference type="InterPro" id="IPR004976">
    <property type="entry name" value="PolyA_pol_cat_Poxvir"/>
</dbReference>
<dbReference type="InterPro" id="IPR037265">
    <property type="entry name" value="PolyA_pol_cat_sf"/>
</dbReference>
<dbReference type="InterPro" id="IPR024231">
    <property type="entry name" value="PolyA_pol_nucTrfase_Poxvir"/>
</dbReference>
<dbReference type="InterPro" id="IPR038419">
    <property type="entry name" value="PolyA_pol_nucTrfase_sf_Poxvir"/>
</dbReference>
<dbReference type="InterPro" id="IPR024397">
    <property type="entry name" value="Poxvirus_polyA_pol_cat_C"/>
</dbReference>
<dbReference type="InterPro" id="IPR024398">
    <property type="entry name" value="Poxvirus_polyA_pol_cat_N"/>
</dbReference>
<dbReference type="InterPro" id="IPR038337">
    <property type="entry name" value="Poxvirus_polyA_pol_cat_N_sf"/>
</dbReference>
<dbReference type="Pfam" id="PF03296">
    <property type="entry name" value="Pox_polyA_pol"/>
    <property type="match status" value="1"/>
</dbReference>
<dbReference type="Pfam" id="PF12629">
    <property type="entry name" value="Pox_polyA_pol_C"/>
    <property type="match status" value="1"/>
</dbReference>
<dbReference type="Pfam" id="PF12630">
    <property type="entry name" value="Pox_polyA_pol_N"/>
    <property type="match status" value="1"/>
</dbReference>
<dbReference type="PIRSF" id="PIRSF015693">
    <property type="entry name" value="VAC-48L_nuct"/>
    <property type="match status" value="1"/>
</dbReference>
<dbReference type="SUPFAM" id="SSF160957">
    <property type="entry name" value="Poly(A) polymerase catalytic subunit-like"/>
    <property type="match status" value="1"/>
</dbReference>
<sequence>MNNSITLTLKNYLGRMPTVNEYYMLKSQVRNIQKIMFFNKDIFISLIKKNKKKFFYEIKSSPSEMRLHILEYFMKQQKTSSIGKLYAIIELQTILVSTYTDVLGVLTTKAPYVFPSNVRYEPRSMKKIAHDILTTINVATVSEKVMGRHNVSELVTNVNLLMEEYLRRHNKSCICYGSYSLYLLNPSIEYGDIDIMQTNSRIFLINLAFLIKFITGHNVMLLKVPYLKNYMVLRDDEDKHIIDSFNVRQDTMHSIPKILIDNIYIVDPTFQLLSMIKMFSQVDRLEDLARNQEKATIKLATLLEYVRVKHGIIFNGKVTNMPMPSSFDHEKRIITVDTSRYNFSFKKCFVYLDENSLSSDILNLNADDAIDFENVSNSVFLINDEIMYTYFSNTILMSSKDEIHEISARGVSAHILMYQILTDGDYLIPLSDIVNSLMFKEKIPIFSIIPRDKKTGKHGIINIEKDIITH</sequence>
<feature type="chain" id="PRO_0000308942" description="Poly(A) polymerase catalytic subunit">
    <location>
        <begin position="1"/>
        <end position="470"/>
    </location>
</feature>
<feature type="active site" evidence="1">
    <location>
        <position position="192"/>
    </location>
</feature>
<feature type="active site" evidence="1">
    <location>
        <position position="194"/>
    </location>
</feature>
<organism>
    <name type="scientific">Yaba monkey tumor virus (strain VR587)</name>
    <name type="common">YMTV</name>
    <dbReference type="NCBI Taxonomy" id="928314"/>
    <lineage>
        <taxon>Viruses</taxon>
        <taxon>Varidnaviria</taxon>
        <taxon>Bamfordvirae</taxon>
        <taxon>Nucleocytoviricota</taxon>
        <taxon>Pokkesviricetes</taxon>
        <taxon>Chitovirales</taxon>
        <taxon>Poxviridae</taxon>
        <taxon>Chordopoxvirinae</taxon>
        <taxon>Yatapoxvirus</taxon>
        <taxon>Yaba monkey tumor virus</taxon>
    </lineage>
</organism>
<evidence type="ECO:0000250" key="1"/>
<evidence type="ECO:0000305" key="2"/>